<proteinExistence type="inferred from homology"/>
<organism>
    <name type="scientific">Vibrio cholerae serotype O1 (strain ATCC 39315 / El Tor Inaba N16961)</name>
    <dbReference type="NCBI Taxonomy" id="243277"/>
    <lineage>
        <taxon>Bacteria</taxon>
        <taxon>Pseudomonadati</taxon>
        <taxon>Pseudomonadota</taxon>
        <taxon>Gammaproteobacteria</taxon>
        <taxon>Vibrionales</taxon>
        <taxon>Vibrionaceae</taxon>
        <taxon>Vibrio</taxon>
    </lineage>
</organism>
<dbReference type="EMBL" id="AE003852">
    <property type="protein sequence ID" value="AAF95909.1"/>
    <property type="molecule type" value="Genomic_DNA"/>
</dbReference>
<dbReference type="PIR" id="B82035">
    <property type="entry name" value="B82035"/>
</dbReference>
<dbReference type="RefSeq" id="NP_232396.1">
    <property type="nucleotide sequence ID" value="NC_002505.1"/>
</dbReference>
<dbReference type="RefSeq" id="WP_000729881.1">
    <property type="nucleotide sequence ID" value="NZ_LT906614.1"/>
</dbReference>
<dbReference type="SMR" id="Q9KNG9"/>
<dbReference type="STRING" id="243277.VC_2770"/>
<dbReference type="DNASU" id="2614947"/>
<dbReference type="EnsemblBacteria" id="AAF95909">
    <property type="protein sequence ID" value="AAF95909"/>
    <property type="gene ID" value="VC_2770"/>
</dbReference>
<dbReference type="GeneID" id="69721154"/>
<dbReference type="KEGG" id="vch:VC_2770"/>
<dbReference type="PATRIC" id="fig|243277.26.peg.2645"/>
<dbReference type="eggNOG" id="COG0356">
    <property type="taxonomic scope" value="Bacteria"/>
</dbReference>
<dbReference type="HOGENOM" id="CLU_041018_1_0_6"/>
<dbReference type="Proteomes" id="UP000000584">
    <property type="component" value="Chromosome 1"/>
</dbReference>
<dbReference type="GO" id="GO:0005886">
    <property type="term" value="C:plasma membrane"/>
    <property type="evidence" value="ECO:0000318"/>
    <property type="project" value="GO_Central"/>
</dbReference>
<dbReference type="GO" id="GO:0045259">
    <property type="term" value="C:proton-transporting ATP synthase complex"/>
    <property type="evidence" value="ECO:0007669"/>
    <property type="project" value="UniProtKB-KW"/>
</dbReference>
<dbReference type="GO" id="GO:0046933">
    <property type="term" value="F:proton-transporting ATP synthase activity, rotational mechanism"/>
    <property type="evidence" value="ECO:0000318"/>
    <property type="project" value="GO_Central"/>
</dbReference>
<dbReference type="GO" id="GO:0042777">
    <property type="term" value="P:proton motive force-driven plasma membrane ATP synthesis"/>
    <property type="evidence" value="ECO:0000318"/>
    <property type="project" value="GO_Central"/>
</dbReference>
<dbReference type="CDD" id="cd00310">
    <property type="entry name" value="ATP-synt_Fo_a_6"/>
    <property type="match status" value="1"/>
</dbReference>
<dbReference type="FunFam" id="1.20.120.220:FF:000002">
    <property type="entry name" value="ATP synthase subunit a"/>
    <property type="match status" value="1"/>
</dbReference>
<dbReference type="Gene3D" id="1.20.120.220">
    <property type="entry name" value="ATP synthase, F0 complex, subunit A"/>
    <property type="match status" value="1"/>
</dbReference>
<dbReference type="HAMAP" id="MF_01393">
    <property type="entry name" value="ATP_synth_a_bact"/>
    <property type="match status" value="1"/>
</dbReference>
<dbReference type="InterPro" id="IPR045082">
    <property type="entry name" value="ATP_syn_F0_a_bact/chloroplast"/>
</dbReference>
<dbReference type="InterPro" id="IPR000568">
    <property type="entry name" value="ATP_synth_F0_asu"/>
</dbReference>
<dbReference type="InterPro" id="IPR023011">
    <property type="entry name" value="ATP_synth_F0_asu_AS"/>
</dbReference>
<dbReference type="InterPro" id="IPR035908">
    <property type="entry name" value="F0_ATP_A_sf"/>
</dbReference>
<dbReference type="NCBIfam" id="TIGR01131">
    <property type="entry name" value="ATP_synt_6_or_A"/>
    <property type="match status" value="1"/>
</dbReference>
<dbReference type="NCBIfam" id="NF004477">
    <property type="entry name" value="PRK05815.1-1"/>
    <property type="match status" value="1"/>
</dbReference>
<dbReference type="PANTHER" id="PTHR42823">
    <property type="entry name" value="ATP SYNTHASE SUBUNIT A, CHLOROPLASTIC"/>
    <property type="match status" value="1"/>
</dbReference>
<dbReference type="PANTHER" id="PTHR42823:SF3">
    <property type="entry name" value="ATP SYNTHASE SUBUNIT A, CHLOROPLASTIC"/>
    <property type="match status" value="1"/>
</dbReference>
<dbReference type="Pfam" id="PF00119">
    <property type="entry name" value="ATP-synt_A"/>
    <property type="match status" value="1"/>
</dbReference>
<dbReference type="PRINTS" id="PR00123">
    <property type="entry name" value="ATPASEA"/>
</dbReference>
<dbReference type="SUPFAM" id="SSF81336">
    <property type="entry name" value="F1F0 ATP synthase subunit A"/>
    <property type="match status" value="1"/>
</dbReference>
<dbReference type="PROSITE" id="PS00449">
    <property type="entry name" value="ATPASE_A"/>
    <property type="match status" value="1"/>
</dbReference>
<keyword id="KW-0066">ATP synthesis</keyword>
<keyword id="KW-0997">Cell inner membrane</keyword>
<keyword id="KW-1003">Cell membrane</keyword>
<keyword id="KW-0138">CF(0)</keyword>
<keyword id="KW-0375">Hydrogen ion transport</keyword>
<keyword id="KW-0406">Ion transport</keyword>
<keyword id="KW-0472">Membrane</keyword>
<keyword id="KW-1185">Reference proteome</keyword>
<keyword id="KW-0812">Transmembrane</keyword>
<keyword id="KW-1133">Transmembrane helix</keyword>
<keyword id="KW-0813">Transport</keyword>
<reference key="1">
    <citation type="journal article" date="2000" name="Nature">
        <title>DNA sequence of both chromosomes of the cholera pathogen Vibrio cholerae.</title>
        <authorList>
            <person name="Heidelberg J.F."/>
            <person name="Eisen J.A."/>
            <person name="Nelson W.C."/>
            <person name="Clayton R.A."/>
            <person name="Gwinn M.L."/>
            <person name="Dodson R.J."/>
            <person name="Haft D.H."/>
            <person name="Hickey E.K."/>
            <person name="Peterson J.D."/>
            <person name="Umayam L.A."/>
            <person name="Gill S.R."/>
            <person name="Nelson K.E."/>
            <person name="Read T.D."/>
            <person name="Tettelin H."/>
            <person name="Richardson D.L."/>
            <person name="Ermolaeva M.D."/>
            <person name="Vamathevan J.J."/>
            <person name="Bass S."/>
            <person name="Qin H."/>
            <person name="Dragoi I."/>
            <person name="Sellers P."/>
            <person name="McDonald L.A."/>
            <person name="Utterback T.R."/>
            <person name="Fleischmann R.D."/>
            <person name="Nierman W.C."/>
            <person name="White O."/>
            <person name="Salzberg S.L."/>
            <person name="Smith H.O."/>
            <person name="Colwell R.R."/>
            <person name="Mekalanos J.J."/>
            <person name="Venter J.C."/>
            <person name="Fraser C.M."/>
        </authorList>
    </citation>
    <scope>NUCLEOTIDE SEQUENCE [LARGE SCALE GENOMIC DNA]</scope>
    <source>
        <strain>ATCC 39315 / El Tor Inaba N16961</strain>
    </source>
</reference>
<name>ATP6_VIBCH</name>
<gene>
    <name evidence="1" type="primary">atpB</name>
    <name type="ordered locus">VC_2770</name>
</gene>
<protein>
    <recommendedName>
        <fullName evidence="1">ATP synthase subunit a</fullName>
    </recommendedName>
    <alternativeName>
        <fullName evidence="1">ATP synthase F0 sector subunit a</fullName>
    </alternativeName>
    <alternativeName>
        <fullName evidence="1">F-ATPase subunit 6</fullName>
    </alternativeName>
</protein>
<sequence length="270" mass="30227">MAAPGEALTPSSYITHHLTNLSTYKLGLVAEESSFWNVHIDSLFFSVLTGLIFLGVFRAVARKATAGVPGKLQCAVEMVVEFVDKNVKDTFHGRNPLIAPLALTIFCWVFLMNLMDLVPIDFLPYPAQHWLGIPYLKVVPSADVNITMAMALGVFALMIYYSIKVKGLGGFAKELALHPFNHWIMIPFNLLIEVVSLLAKPLSLGMRLFGNMFAGEVVFILCAAMLPWYLQWMGSLPWAIFHILVILIQSFVFMMLTIVYMSMAHEDNDH</sequence>
<comment type="function">
    <text evidence="1">Key component of the proton channel; it plays a direct role in the translocation of protons across the membrane.</text>
</comment>
<comment type="subunit">
    <text evidence="1">F-type ATPases have 2 components, CF(1) - the catalytic core - and CF(0) - the membrane proton channel. CF(1) has five subunits: alpha(3), beta(3), gamma(1), delta(1), epsilon(1). CF(0) has three main subunits: a(1), b(2) and c(9-12). The alpha and beta chains form an alternating ring which encloses part of the gamma chain. CF(1) is attached to CF(0) by a central stalk formed by the gamma and epsilon chains, while a peripheral stalk is formed by the delta and b chains.</text>
</comment>
<comment type="subcellular location">
    <subcellularLocation>
        <location evidence="1">Cell inner membrane</location>
        <topology evidence="1">Multi-pass membrane protein</topology>
    </subcellularLocation>
</comment>
<comment type="similarity">
    <text evidence="1">Belongs to the ATPase A chain family.</text>
</comment>
<accession>Q9KNG9</accession>
<evidence type="ECO:0000255" key="1">
    <source>
        <dbReference type="HAMAP-Rule" id="MF_01393"/>
    </source>
</evidence>
<feature type="chain" id="PRO_0000362497" description="ATP synthase subunit a">
    <location>
        <begin position="1"/>
        <end position="270"/>
    </location>
</feature>
<feature type="transmembrane region" description="Helical" evidence="1">
    <location>
        <begin position="37"/>
        <end position="57"/>
    </location>
</feature>
<feature type="transmembrane region" description="Helical" evidence="1">
    <location>
        <begin position="98"/>
        <end position="118"/>
    </location>
</feature>
<feature type="transmembrane region" description="Helical" evidence="1">
    <location>
        <begin position="143"/>
        <end position="163"/>
    </location>
</feature>
<feature type="transmembrane region" description="Helical" evidence="1">
    <location>
        <begin position="208"/>
        <end position="228"/>
    </location>
</feature>
<feature type="transmembrane region" description="Helical" evidence="1">
    <location>
        <begin position="239"/>
        <end position="259"/>
    </location>
</feature>